<accession>A2SEX8</accession>
<dbReference type="EC" id="2.1.2.11" evidence="1"/>
<dbReference type="EMBL" id="CP000555">
    <property type="protein sequence ID" value="ABM94117.1"/>
    <property type="status" value="ALT_INIT"/>
    <property type="molecule type" value="Genomic_DNA"/>
</dbReference>
<dbReference type="RefSeq" id="WP_148210897.1">
    <property type="nucleotide sequence ID" value="NC_008825.1"/>
</dbReference>
<dbReference type="SMR" id="A2SEX8"/>
<dbReference type="STRING" id="420662.Mpe_A1156"/>
<dbReference type="KEGG" id="mpt:Mpe_A1156"/>
<dbReference type="eggNOG" id="COG0413">
    <property type="taxonomic scope" value="Bacteria"/>
</dbReference>
<dbReference type="HOGENOM" id="CLU_036645_1_0_4"/>
<dbReference type="UniPathway" id="UPA00028">
    <property type="reaction ID" value="UER00003"/>
</dbReference>
<dbReference type="Proteomes" id="UP000000366">
    <property type="component" value="Chromosome"/>
</dbReference>
<dbReference type="GO" id="GO:0005737">
    <property type="term" value="C:cytoplasm"/>
    <property type="evidence" value="ECO:0007669"/>
    <property type="project" value="UniProtKB-SubCell"/>
</dbReference>
<dbReference type="GO" id="GO:0003864">
    <property type="term" value="F:3-methyl-2-oxobutanoate hydroxymethyltransferase activity"/>
    <property type="evidence" value="ECO:0007669"/>
    <property type="project" value="UniProtKB-UniRule"/>
</dbReference>
<dbReference type="GO" id="GO:0000287">
    <property type="term" value="F:magnesium ion binding"/>
    <property type="evidence" value="ECO:0007669"/>
    <property type="project" value="TreeGrafter"/>
</dbReference>
<dbReference type="GO" id="GO:0015940">
    <property type="term" value="P:pantothenate biosynthetic process"/>
    <property type="evidence" value="ECO:0007669"/>
    <property type="project" value="UniProtKB-UniRule"/>
</dbReference>
<dbReference type="CDD" id="cd06557">
    <property type="entry name" value="KPHMT-like"/>
    <property type="match status" value="1"/>
</dbReference>
<dbReference type="FunFam" id="3.20.20.60:FF:000003">
    <property type="entry name" value="3-methyl-2-oxobutanoate hydroxymethyltransferase"/>
    <property type="match status" value="1"/>
</dbReference>
<dbReference type="Gene3D" id="3.20.20.60">
    <property type="entry name" value="Phosphoenolpyruvate-binding domains"/>
    <property type="match status" value="1"/>
</dbReference>
<dbReference type="HAMAP" id="MF_00156">
    <property type="entry name" value="PanB"/>
    <property type="match status" value="1"/>
</dbReference>
<dbReference type="InterPro" id="IPR003700">
    <property type="entry name" value="Pantoate_hydroxy_MeTrfase"/>
</dbReference>
<dbReference type="InterPro" id="IPR015813">
    <property type="entry name" value="Pyrv/PenolPyrv_kinase-like_dom"/>
</dbReference>
<dbReference type="InterPro" id="IPR040442">
    <property type="entry name" value="Pyrv_kinase-like_dom_sf"/>
</dbReference>
<dbReference type="NCBIfam" id="TIGR00222">
    <property type="entry name" value="panB"/>
    <property type="match status" value="1"/>
</dbReference>
<dbReference type="NCBIfam" id="NF001452">
    <property type="entry name" value="PRK00311.1"/>
    <property type="match status" value="1"/>
</dbReference>
<dbReference type="PANTHER" id="PTHR20881">
    <property type="entry name" value="3-METHYL-2-OXOBUTANOATE HYDROXYMETHYLTRANSFERASE"/>
    <property type="match status" value="1"/>
</dbReference>
<dbReference type="PANTHER" id="PTHR20881:SF0">
    <property type="entry name" value="3-METHYL-2-OXOBUTANOATE HYDROXYMETHYLTRANSFERASE"/>
    <property type="match status" value="1"/>
</dbReference>
<dbReference type="Pfam" id="PF02548">
    <property type="entry name" value="Pantoate_transf"/>
    <property type="match status" value="1"/>
</dbReference>
<dbReference type="PIRSF" id="PIRSF000388">
    <property type="entry name" value="Pantoate_hydroxy_MeTrfase"/>
    <property type="match status" value="1"/>
</dbReference>
<dbReference type="SUPFAM" id="SSF51621">
    <property type="entry name" value="Phosphoenolpyruvate/pyruvate domain"/>
    <property type="match status" value="1"/>
</dbReference>
<protein>
    <recommendedName>
        <fullName evidence="1">3-methyl-2-oxobutanoate hydroxymethyltransferase 2</fullName>
        <ecNumber evidence="1">2.1.2.11</ecNumber>
    </recommendedName>
    <alternativeName>
        <fullName evidence="1">Ketopantoate hydroxymethyltransferase 2</fullName>
        <shortName evidence="1">KPHMT 2</shortName>
    </alternativeName>
</protein>
<sequence length="279" mass="29450">MSSHSSPADTPSARKPVTLHTLREMHARGEKIAMITAYDASFAALVDTAGVDCILVGDSLGMVLKGQSSTLSVTMEQIGYHTRSTSRGTKAAFLIADMPFGSYQENPVQALRNAGTLMAAGAQMVKLEGGGWTPETVNFLVERGVPVCAHLGLTPQSVHALGGYRIQGKDEAGAATLRRHAKALADAGAAMMVLELMPSRVAREVQADNPGLMTIGIGAGAGTAGQVLVLHDMLGVTRGRLPRFVRNFMDSATSIEDAVRRYVAAVKDGSFPDETLHAY</sequence>
<keyword id="KW-0963">Cytoplasm</keyword>
<keyword id="KW-0460">Magnesium</keyword>
<keyword id="KW-0479">Metal-binding</keyword>
<keyword id="KW-0566">Pantothenate biosynthesis</keyword>
<keyword id="KW-1185">Reference proteome</keyword>
<keyword id="KW-0808">Transferase</keyword>
<name>PANB2_METPP</name>
<feature type="chain" id="PRO_0000297296" description="3-methyl-2-oxobutanoate hydroxymethyltransferase 2">
    <location>
        <begin position="1"/>
        <end position="279"/>
    </location>
</feature>
<feature type="active site" description="Proton acceptor" evidence="1">
    <location>
        <position position="195"/>
    </location>
</feature>
<feature type="binding site" evidence="1">
    <location>
        <begin position="58"/>
        <end position="59"/>
    </location>
    <ligand>
        <name>3-methyl-2-oxobutanoate</name>
        <dbReference type="ChEBI" id="CHEBI:11851"/>
    </ligand>
</feature>
<feature type="binding site" evidence="1">
    <location>
        <position position="58"/>
    </location>
    <ligand>
        <name>Mg(2+)</name>
        <dbReference type="ChEBI" id="CHEBI:18420"/>
    </ligand>
</feature>
<feature type="binding site" evidence="1">
    <location>
        <position position="97"/>
    </location>
    <ligand>
        <name>3-methyl-2-oxobutanoate</name>
        <dbReference type="ChEBI" id="CHEBI:11851"/>
    </ligand>
</feature>
<feature type="binding site" evidence="1">
    <location>
        <position position="97"/>
    </location>
    <ligand>
        <name>Mg(2+)</name>
        <dbReference type="ChEBI" id="CHEBI:18420"/>
    </ligand>
</feature>
<feature type="binding site" evidence="1">
    <location>
        <position position="126"/>
    </location>
    <ligand>
        <name>3-methyl-2-oxobutanoate</name>
        <dbReference type="ChEBI" id="CHEBI:11851"/>
    </ligand>
</feature>
<feature type="binding site" evidence="1">
    <location>
        <position position="128"/>
    </location>
    <ligand>
        <name>Mg(2+)</name>
        <dbReference type="ChEBI" id="CHEBI:18420"/>
    </ligand>
</feature>
<evidence type="ECO:0000255" key="1">
    <source>
        <dbReference type="HAMAP-Rule" id="MF_00156"/>
    </source>
</evidence>
<evidence type="ECO:0000305" key="2"/>
<comment type="function">
    <text evidence="1">Catalyzes the reversible reaction in which hydroxymethyl group from 5,10-methylenetetrahydrofolate is transferred onto alpha-ketoisovalerate to form ketopantoate.</text>
</comment>
<comment type="catalytic activity">
    <reaction evidence="1">
        <text>3-methyl-2-oxobutanoate + (6R)-5,10-methylene-5,6,7,8-tetrahydrofolate + H2O = 2-dehydropantoate + (6S)-5,6,7,8-tetrahydrofolate</text>
        <dbReference type="Rhea" id="RHEA:11824"/>
        <dbReference type="ChEBI" id="CHEBI:11561"/>
        <dbReference type="ChEBI" id="CHEBI:11851"/>
        <dbReference type="ChEBI" id="CHEBI:15377"/>
        <dbReference type="ChEBI" id="CHEBI:15636"/>
        <dbReference type="ChEBI" id="CHEBI:57453"/>
        <dbReference type="EC" id="2.1.2.11"/>
    </reaction>
</comment>
<comment type="cofactor">
    <cofactor evidence="1">
        <name>Mg(2+)</name>
        <dbReference type="ChEBI" id="CHEBI:18420"/>
    </cofactor>
    <text evidence="1">Binds 1 Mg(2+) ion per subunit.</text>
</comment>
<comment type="pathway">
    <text evidence="1">Cofactor biosynthesis; (R)-pantothenate biosynthesis; (R)-pantoate from 3-methyl-2-oxobutanoate: step 1/2.</text>
</comment>
<comment type="subunit">
    <text evidence="1">Homodecamer; pentamer of dimers.</text>
</comment>
<comment type="subcellular location">
    <subcellularLocation>
        <location evidence="1">Cytoplasm</location>
    </subcellularLocation>
</comment>
<comment type="similarity">
    <text evidence="1">Belongs to the PanB family.</text>
</comment>
<comment type="sequence caution" evidence="2">
    <conflict type="erroneous initiation">
        <sequence resource="EMBL-CDS" id="ABM94117"/>
    </conflict>
</comment>
<gene>
    <name evidence="1" type="primary">panB2</name>
    <name type="ordered locus">Mpe_A1156</name>
</gene>
<organism>
    <name type="scientific">Methylibium petroleiphilum (strain ATCC BAA-1232 / LMG 22953 / PM1)</name>
    <dbReference type="NCBI Taxonomy" id="420662"/>
    <lineage>
        <taxon>Bacteria</taxon>
        <taxon>Pseudomonadati</taxon>
        <taxon>Pseudomonadota</taxon>
        <taxon>Betaproteobacteria</taxon>
        <taxon>Burkholderiales</taxon>
        <taxon>Sphaerotilaceae</taxon>
        <taxon>Methylibium</taxon>
    </lineage>
</organism>
<reference key="1">
    <citation type="journal article" date="2007" name="J. Bacteriol.">
        <title>Whole-genome analysis of the methyl tert-butyl ether-degrading beta-proteobacterium Methylibium petroleiphilum PM1.</title>
        <authorList>
            <person name="Kane S.R."/>
            <person name="Chakicherla A.Y."/>
            <person name="Chain P.S.G."/>
            <person name="Schmidt R."/>
            <person name="Shin M.W."/>
            <person name="Legler T.C."/>
            <person name="Scow K.M."/>
            <person name="Larimer F.W."/>
            <person name="Lucas S.M."/>
            <person name="Richardson P.M."/>
            <person name="Hristova K.R."/>
        </authorList>
    </citation>
    <scope>NUCLEOTIDE SEQUENCE [LARGE SCALE GENOMIC DNA]</scope>
    <source>
        <strain>ATCC BAA-1232 / LMG 22953 / PM1</strain>
    </source>
</reference>
<proteinExistence type="inferred from homology"/>